<comment type="function">
    <text evidence="1">Aldehyde decarbonylase involved in the conversion of aldehydes to alkanes. Core component of a very-long-chain alkane synthesis complex.</text>
</comment>
<comment type="catalytic activity">
    <reaction evidence="1">
        <text>a long-chain fatty aldehyde + 2 NADPH + O2 + H(+) = a long-chain alkane + formate + 2 NADP(+) + H2O</text>
        <dbReference type="Rhea" id="RHEA:21440"/>
        <dbReference type="ChEBI" id="CHEBI:15377"/>
        <dbReference type="ChEBI" id="CHEBI:15378"/>
        <dbReference type="ChEBI" id="CHEBI:15379"/>
        <dbReference type="ChEBI" id="CHEBI:15740"/>
        <dbReference type="ChEBI" id="CHEBI:17176"/>
        <dbReference type="ChEBI" id="CHEBI:57783"/>
        <dbReference type="ChEBI" id="CHEBI:58349"/>
        <dbReference type="ChEBI" id="CHEBI:83563"/>
        <dbReference type="EC" id="4.1.99.5"/>
    </reaction>
</comment>
<comment type="subunit">
    <text evidence="1">Homodimer.</text>
</comment>
<comment type="subcellular location">
    <subcellularLocation>
        <location evidence="1">Endoplasmic reticulum membrane</location>
        <topology evidence="1">Multi-pass membrane protein</topology>
    </subcellularLocation>
</comment>
<comment type="similarity">
    <text evidence="3">Belongs to the sterol desaturase family.</text>
</comment>
<organism>
    <name type="scientific">Oryza sativa subsp. indica</name>
    <name type="common">Rice</name>
    <dbReference type="NCBI Taxonomy" id="39946"/>
    <lineage>
        <taxon>Eukaryota</taxon>
        <taxon>Viridiplantae</taxon>
        <taxon>Streptophyta</taxon>
        <taxon>Embryophyta</taxon>
        <taxon>Tracheophyta</taxon>
        <taxon>Spermatophyta</taxon>
        <taxon>Magnoliopsida</taxon>
        <taxon>Liliopsida</taxon>
        <taxon>Poales</taxon>
        <taxon>Poaceae</taxon>
        <taxon>BOP clade</taxon>
        <taxon>Oryzoideae</taxon>
        <taxon>Oryzeae</taxon>
        <taxon>Oryzinae</taxon>
        <taxon>Oryza</taxon>
        <taxon>Oryza sativa</taxon>
    </lineage>
</organism>
<dbReference type="EC" id="4.1.99.5" evidence="1"/>
<dbReference type="EMBL" id="CM000132">
    <property type="protein sequence ID" value="EEC82496.1"/>
    <property type="molecule type" value="Genomic_DNA"/>
</dbReference>
<dbReference type="STRING" id="39946.B8B4W4"/>
<dbReference type="EnsemblPlants" id="BGIOSGA023874-TA">
    <property type="protein sequence ID" value="BGIOSGA023874-PA"/>
    <property type="gene ID" value="BGIOSGA023874"/>
</dbReference>
<dbReference type="EnsemblPlants" id="OsGoSa_07g0023920.01">
    <property type="protein sequence ID" value="OsGoSa_07g0023920.01"/>
    <property type="gene ID" value="OsGoSa_07g0023920"/>
</dbReference>
<dbReference type="EnsemblPlants" id="OsIR64_07g0024610.01">
    <property type="protein sequence ID" value="OsIR64_07g0024610.01"/>
    <property type="gene ID" value="OsIR64_07g0024610"/>
</dbReference>
<dbReference type="EnsemblPlants" id="OsKYG_07g0024010.01">
    <property type="protein sequence ID" value="OsKYG_07g0024010.01"/>
    <property type="gene ID" value="OsKYG_07g0024010"/>
</dbReference>
<dbReference type="EnsemblPlants" id="OsLaMu_07g0023880.01">
    <property type="protein sequence ID" value="OsLaMu_07g0023880.01"/>
    <property type="gene ID" value="OsLaMu_07g0023880"/>
</dbReference>
<dbReference type="EnsemblPlants" id="OsLima_07g0023860.01">
    <property type="protein sequence ID" value="OsLima_07g0023860.01"/>
    <property type="gene ID" value="OsLima_07g0023860"/>
</dbReference>
<dbReference type="EnsemblPlants" id="OsLiXu_07g0024120.01">
    <property type="protein sequence ID" value="OsLiXu_07g0024120.01"/>
    <property type="gene ID" value="OsLiXu_07g0024120"/>
</dbReference>
<dbReference type="EnsemblPlants" id="OsMH63_07G023800_01">
    <property type="protein sequence ID" value="OsMH63_07G023800_01"/>
    <property type="gene ID" value="OsMH63_07G023800"/>
</dbReference>
<dbReference type="EnsemblPlants" id="OsPr106_07g0024090.01">
    <property type="protein sequence ID" value="OsPr106_07g0024090.01"/>
    <property type="gene ID" value="OsPr106_07g0024090"/>
</dbReference>
<dbReference type="EnsemblPlants" id="OsZS97_07G023720_01">
    <property type="protein sequence ID" value="OsZS97_07G023720_01"/>
    <property type="gene ID" value="OsZS97_07G023720"/>
</dbReference>
<dbReference type="Gramene" id="BGIOSGA023874-TA">
    <property type="protein sequence ID" value="BGIOSGA023874-PA"/>
    <property type="gene ID" value="BGIOSGA023874"/>
</dbReference>
<dbReference type="Gramene" id="OsGoSa_07g0023920.01">
    <property type="protein sequence ID" value="OsGoSa_07g0023920.01"/>
    <property type="gene ID" value="OsGoSa_07g0023920"/>
</dbReference>
<dbReference type="Gramene" id="OsIR64_07g0024610.01">
    <property type="protein sequence ID" value="OsIR64_07g0024610.01"/>
    <property type="gene ID" value="OsIR64_07g0024610"/>
</dbReference>
<dbReference type="Gramene" id="OsKYG_07g0024010.01">
    <property type="protein sequence ID" value="OsKYG_07g0024010.01"/>
    <property type="gene ID" value="OsKYG_07g0024010"/>
</dbReference>
<dbReference type="Gramene" id="OsLaMu_07g0023880.01">
    <property type="protein sequence ID" value="OsLaMu_07g0023880.01"/>
    <property type="gene ID" value="OsLaMu_07g0023880"/>
</dbReference>
<dbReference type="Gramene" id="OsLima_07g0023860.01">
    <property type="protein sequence ID" value="OsLima_07g0023860.01"/>
    <property type="gene ID" value="OsLima_07g0023860"/>
</dbReference>
<dbReference type="Gramene" id="OsLiXu_07g0024120.01">
    <property type="protein sequence ID" value="OsLiXu_07g0024120.01"/>
    <property type="gene ID" value="OsLiXu_07g0024120"/>
</dbReference>
<dbReference type="Gramene" id="OsMH63_07G023800_01">
    <property type="protein sequence ID" value="OsMH63_07G023800_01"/>
    <property type="gene ID" value="OsMH63_07G023800"/>
</dbReference>
<dbReference type="Gramene" id="OsPr106_07g0024090.01">
    <property type="protein sequence ID" value="OsPr106_07g0024090.01"/>
    <property type="gene ID" value="OsPr106_07g0024090"/>
</dbReference>
<dbReference type="Gramene" id="OsZS97_07G023720_01">
    <property type="protein sequence ID" value="OsZS97_07G023720_01"/>
    <property type="gene ID" value="OsZS97_07G023720"/>
</dbReference>
<dbReference type="HOGENOM" id="CLU_043293_1_0_1"/>
<dbReference type="OMA" id="WSDELMA"/>
<dbReference type="OrthoDB" id="408954at2759"/>
<dbReference type="Proteomes" id="UP000007015">
    <property type="component" value="Chromosome 7"/>
</dbReference>
<dbReference type="GO" id="GO:0005789">
    <property type="term" value="C:endoplasmic reticulum membrane"/>
    <property type="evidence" value="ECO:0007669"/>
    <property type="project" value="UniProtKB-SubCell"/>
</dbReference>
<dbReference type="GO" id="GO:0071771">
    <property type="term" value="F:aldehyde oxygenase (deformylating) activity"/>
    <property type="evidence" value="ECO:0007669"/>
    <property type="project" value="UniProtKB-EC"/>
</dbReference>
<dbReference type="GO" id="GO:0005506">
    <property type="term" value="F:iron ion binding"/>
    <property type="evidence" value="ECO:0007669"/>
    <property type="project" value="InterPro"/>
</dbReference>
<dbReference type="GO" id="GO:0016491">
    <property type="term" value="F:oxidoreductase activity"/>
    <property type="evidence" value="ECO:0007669"/>
    <property type="project" value="InterPro"/>
</dbReference>
<dbReference type="GO" id="GO:0008610">
    <property type="term" value="P:lipid biosynthetic process"/>
    <property type="evidence" value="ECO:0007669"/>
    <property type="project" value="InterPro"/>
</dbReference>
<dbReference type="InterPro" id="IPR006694">
    <property type="entry name" value="Fatty_acid_hydroxylase"/>
</dbReference>
<dbReference type="InterPro" id="IPR050307">
    <property type="entry name" value="Sterol_Desaturase_Related"/>
</dbReference>
<dbReference type="PANTHER" id="PTHR11863">
    <property type="entry name" value="STEROL DESATURASE"/>
    <property type="match status" value="1"/>
</dbReference>
<dbReference type="Pfam" id="PF04116">
    <property type="entry name" value="FA_hydroxylase"/>
    <property type="match status" value="1"/>
</dbReference>
<accession>B8B4W4</accession>
<evidence type="ECO:0000250" key="1">
    <source>
        <dbReference type="UniProtKB" id="F4HVY0"/>
    </source>
</evidence>
<evidence type="ECO:0000255" key="2"/>
<evidence type="ECO:0000305" key="3"/>
<evidence type="ECO:0000312" key="4">
    <source>
        <dbReference type="EMBL" id="EEC82496.1"/>
    </source>
</evidence>
<gene>
    <name evidence="3" type="primary">GL1-9</name>
    <name evidence="4" type="ORF">OsI_26956</name>
</gene>
<reference key="1">
    <citation type="journal article" date="2005" name="PLoS Biol.">
        <title>The genomes of Oryza sativa: a history of duplications.</title>
        <authorList>
            <person name="Yu J."/>
            <person name="Wang J."/>
            <person name="Lin W."/>
            <person name="Li S."/>
            <person name="Li H."/>
            <person name="Zhou J."/>
            <person name="Ni P."/>
            <person name="Dong W."/>
            <person name="Hu S."/>
            <person name="Zeng C."/>
            <person name="Zhang J."/>
            <person name="Zhang Y."/>
            <person name="Li R."/>
            <person name="Xu Z."/>
            <person name="Li S."/>
            <person name="Li X."/>
            <person name="Zheng H."/>
            <person name="Cong L."/>
            <person name="Lin L."/>
            <person name="Yin J."/>
            <person name="Geng J."/>
            <person name="Li G."/>
            <person name="Shi J."/>
            <person name="Liu J."/>
            <person name="Lv H."/>
            <person name="Li J."/>
            <person name="Wang J."/>
            <person name="Deng Y."/>
            <person name="Ran L."/>
            <person name="Shi X."/>
            <person name="Wang X."/>
            <person name="Wu Q."/>
            <person name="Li C."/>
            <person name="Ren X."/>
            <person name="Wang J."/>
            <person name="Wang X."/>
            <person name="Li D."/>
            <person name="Liu D."/>
            <person name="Zhang X."/>
            <person name="Ji Z."/>
            <person name="Zhao W."/>
            <person name="Sun Y."/>
            <person name="Zhang Z."/>
            <person name="Bao J."/>
            <person name="Han Y."/>
            <person name="Dong L."/>
            <person name="Ji J."/>
            <person name="Chen P."/>
            <person name="Wu S."/>
            <person name="Liu J."/>
            <person name="Xiao Y."/>
            <person name="Bu D."/>
            <person name="Tan J."/>
            <person name="Yang L."/>
            <person name="Ye C."/>
            <person name="Zhang J."/>
            <person name="Xu J."/>
            <person name="Zhou Y."/>
            <person name="Yu Y."/>
            <person name="Zhang B."/>
            <person name="Zhuang S."/>
            <person name="Wei H."/>
            <person name="Liu B."/>
            <person name="Lei M."/>
            <person name="Yu H."/>
            <person name="Li Y."/>
            <person name="Xu H."/>
            <person name="Wei S."/>
            <person name="He X."/>
            <person name="Fang L."/>
            <person name="Zhang Z."/>
            <person name="Zhang Y."/>
            <person name="Huang X."/>
            <person name="Su Z."/>
            <person name="Tong W."/>
            <person name="Li J."/>
            <person name="Tong Z."/>
            <person name="Li S."/>
            <person name="Ye J."/>
            <person name="Wang L."/>
            <person name="Fang L."/>
            <person name="Lei T."/>
            <person name="Chen C.-S."/>
            <person name="Chen H.-C."/>
            <person name="Xu Z."/>
            <person name="Li H."/>
            <person name="Huang H."/>
            <person name="Zhang F."/>
            <person name="Xu H."/>
            <person name="Li N."/>
            <person name="Zhao C."/>
            <person name="Li S."/>
            <person name="Dong L."/>
            <person name="Huang Y."/>
            <person name="Li L."/>
            <person name="Xi Y."/>
            <person name="Qi Q."/>
            <person name="Li W."/>
            <person name="Zhang B."/>
            <person name="Hu W."/>
            <person name="Zhang Y."/>
            <person name="Tian X."/>
            <person name="Jiao Y."/>
            <person name="Liang X."/>
            <person name="Jin J."/>
            <person name="Gao L."/>
            <person name="Zheng W."/>
            <person name="Hao B."/>
            <person name="Liu S.-M."/>
            <person name="Wang W."/>
            <person name="Yuan L."/>
            <person name="Cao M."/>
            <person name="McDermott J."/>
            <person name="Samudrala R."/>
            <person name="Wang J."/>
            <person name="Wong G.K.-S."/>
            <person name="Yang H."/>
        </authorList>
    </citation>
    <scope>NUCLEOTIDE SEQUENCE [LARGE SCALE GENOMIC DNA]</scope>
    <source>
        <strain>cv. 93-11</strain>
    </source>
</reference>
<proteinExistence type="inferred from homology"/>
<protein>
    <recommendedName>
        <fullName evidence="3">Very-long-chain aldehyde decarbonylase GL1-9</fullName>
        <ecNumber evidence="1">4.1.99.5</ecNumber>
    </recommendedName>
    <alternativeName>
        <fullName evidence="3">Protein GLOSSY 1-9</fullName>
    </alternativeName>
</protein>
<sequence length="258" mass="29905">MVPWEGYVSDETMGTFAPIALYWVYAGGYQLVLHRRPLERYRLHTRAEEEEKNLVALPAVVRGVLLQQLVQAIVAMILFMVTSDSSAVVVQPPIIIQAFQFLVAMLVMDSWQYFVHRYMHQNKFLYRHIHSQHHRLIVPYAIGALYNHPLEGLLLDTVGGAISFLVSGMTPRTSVFFFCFAVLKTVDDHCGLWLPYNIFQSLFQNNTAYHDVHHQLQGSKYNYSQPFFSIWDRILGTHMPYNLVRRKEGGFEARPLRD</sequence>
<feature type="chain" id="PRO_0000445883" description="Very-long-chain aldehyde decarbonylase GL1-9">
    <location>
        <begin position="1"/>
        <end position="258"/>
    </location>
</feature>
<feature type="transmembrane region" description="Helical" evidence="2">
    <location>
        <begin position="13"/>
        <end position="33"/>
    </location>
</feature>
<feature type="transmembrane region" description="Helical" evidence="2">
    <location>
        <begin position="63"/>
        <end position="83"/>
    </location>
</feature>
<feature type="transmembrane region" description="Helical" evidence="2">
    <location>
        <begin position="88"/>
        <end position="108"/>
    </location>
</feature>
<feature type="transmembrane region" description="Helical" evidence="2">
    <location>
        <begin position="149"/>
        <end position="169"/>
    </location>
</feature>
<feature type="transmembrane region" description="Helical" evidence="2">
    <location>
        <begin position="175"/>
        <end position="195"/>
    </location>
</feature>
<feature type="domain" description="Fatty acid hydroxylase" evidence="2">
    <location>
        <begin position="101"/>
        <end position="237"/>
    </location>
</feature>
<keyword id="KW-0256">Endoplasmic reticulum</keyword>
<keyword id="KW-0456">Lyase</keyword>
<keyword id="KW-0472">Membrane</keyword>
<keyword id="KW-0521">NADP</keyword>
<keyword id="KW-1185">Reference proteome</keyword>
<keyword id="KW-0812">Transmembrane</keyword>
<keyword id="KW-1133">Transmembrane helix</keyword>
<name>GLO19_ORYSI</name>